<gene>
    <name evidence="1" type="primary">msrA</name>
    <name type="ordered locus">SG4253</name>
</gene>
<dbReference type="EC" id="1.8.4.11" evidence="1"/>
<dbReference type="EMBL" id="AM933173">
    <property type="protein sequence ID" value="CAR40015.1"/>
    <property type="molecule type" value="Genomic_DNA"/>
</dbReference>
<dbReference type="RefSeq" id="WP_000051467.1">
    <property type="nucleotide sequence ID" value="NC_011274.1"/>
</dbReference>
<dbReference type="SMR" id="B5R9G7"/>
<dbReference type="KEGG" id="seg:SG4253"/>
<dbReference type="HOGENOM" id="CLU_031040_10_3_6"/>
<dbReference type="Proteomes" id="UP000008321">
    <property type="component" value="Chromosome"/>
</dbReference>
<dbReference type="GO" id="GO:0005737">
    <property type="term" value="C:cytoplasm"/>
    <property type="evidence" value="ECO:0007669"/>
    <property type="project" value="TreeGrafter"/>
</dbReference>
<dbReference type="GO" id="GO:0036456">
    <property type="term" value="F:L-methionine-(S)-S-oxide reductase activity"/>
    <property type="evidence" value="ECO:0007669"/>
    <property type="project" value="TreeGrafter"/>
</dbReference>
<dbReference type="GO" id="GO:0008113">
    <property type="term" value="F:peptide-methionine (S)-S-oxide reductase activity"/>
    <property type="evidence" value="ECO:0007669"/>
    <property type="project" value="UniProtKB-UniRule"/>
</dbReference>
<dbReference type="GO" id="GO:0034599">
    <property type="term" value="P:cellular response to oxidative stress"/>
    <property type="evidence" value="ECO:0007669"/>
    <property type="project" value="TreeGrafter"/>
</dbReference>
<dbReference type="GO" id="GO:0036211">
    <property type="term" value="P:protein modification process"/>
    <property type="evidence" value="ECO:0007669"/>
    <property type="project" value="UniProtKB-UniRule"/>
</dbReference>
<dbReference type="FunFam" id="3.30.1060.10:FF:000001">
    <property type="entry name" value="Peptide methionine sulfoxide reductase MsrA"/>
    <property type="match status" value="1"/>
</dbReference>
<dbReference type="Gene3D" id="3.30.1060.10">
    <property type="entry name" value="Peptide methionine sulphoxide reductase MsrA"/>
    <property type="match status" value="1"/>
</dbReference>
<dbReference type="HAMAP" id="MF_01401">
    <property type="entry name" value="MsrA"/>
    <property type="match status" value="1"/>
</dbReference>
<dbReference type="InterPro" id="IPR002569">
    <property type="entry name" value="Met_Sox_Rdtase_MsrA_dom"/>
</dbReference>
<dbReference type="InterPro" id="IPR036509">
    <property type="entry name" value="Met_Sox_Rdtase_MsrA_sf"/>
</dbReference>
<dbReference type="InterPro" id="IPR050162">
    <property type="entry name" value="MsrA_MetSO_reductase"/>
</dbReference>
<dbReference type="NCBIfam" id="TIGR00401">
    <property type="entry name" value="msrA"/>
    <property type="match status" value="1"/>
</dbReference>
<dbReference type="PANTHER" id="PTHR42799">
    <property type="entry name" value="MITOCHONDRIAL PEPTIDE METHIONINE SULFOXIDE REDUCTASE"/>
    <property type="match status" value="1"/>
</dbReference>
<dbReference type="PANTHER" id="PTHR42799:SF2">
    <property type="entry name" value="MITOCHONDRIAL PEPTIDE METHIONINE SULFOXIDE REDUCTASE"/>
    <property type="match status" value="1"/>
</dbReference>
<dbReference type="Pfam" id="PF01625">
    <property type="entry name" value="PMSR"/>
    <property type="match status" value="1"/>
</dbReference>
<dbReference type="SUPFAM" id="SSF55068">
    <property type="entry name" value="Peptide methionine sulfoxide reductase"/>
    <property type="match status" value="1"/>
</dbReference>
<reference key="1">
    <citation type="journal article" date="2008" name="Genome Res.">
        <title>Comparative genome analysis of Salmonella enteritidis PT4 and Salmonella gallinarum 287/91 provides insights into evolutionary and host adaptation pathways.</title>
        <authorList>
            <person name="Thomson N.R."/>
            <person name="Clayton D.J."/>
            <person name="Windhorst D."/>
            <person name="Vernikos G."/>
            <person name="Davidson S."/>
            <person name="Churcher C."/>
            <person name="Quail M.A."/>
            <person name="Stevens M."/>
            <person name="Jones M.A."/>
            <person name="Watson M."/>
            <person name="Barron A."/>
            <person name="Layton A."/>
            <person name="Pickard D."/>
            <person name="Kingsley R.A."/>
            <person name="Bignell A."/>
            <person name="Clark L."/>
            <person name="Harris B."/>
            <person name="Ormond D."/>
            <person name="Abdellah Z."/>
            <person name="Brooks K."/>
            <person name="Cherevach I."/>
            <person name="Chillingworth T."/>
            <person name="Woodward J."/>
            <person name="Norberczak H."/>
            <person name="Lord A."/>
            <person name="Arrowsmith C."/>
            <person name="Jagels K."/>
            <person name="Moule S."/>
            <person name="Mungall K."/>
            <person name="Saunders M."/>
            <person name="Whitehead S."/>
            <person name="Chabalgoity J.A."/>
            <person name="Maskell D."/>
            <person name="Humphreys T."/>
            <person name="Roberts M."/>
            <person name="Barrow P.A."/>
            <person name="Dougan G."/>
            <person name="Parkhill J."/>
        </authorList>
    </citation>
    <scope>NUCLEOTIDE SEQUENCE [LARGE SCALE GENOMIC DNA]</scope>
    <source>
        <strain>287/91 / NCTC 13346</strain>
    </source>
</reference>
<name>MSRA_SALG2</name>
<keyword id="KW-0560">Oxidoreductase</keyword>
<proteinExistence type="inferred from homology"/>
<protein>
    <recommendedName>
        <fullName evidence="1">Peptide methionine sulfoxide reductase MsrA</fullName>
        <shortName evidence="1">Protein-methionine-S-oxide reductase</shortName>
        <ecNumber evidence="1">1.8.4.11</ecNumber>
    </recommendedName>
    <alternativeName>
        <fullName evidence="1">Peptide-methionine (S)-S-oxide reductase</fullName>
        <shortName evidence="1">Peptide Met(O) reductase</shortName>
    </alternativeName>
</protein>
<comment type="function">
    <text evidence="1">Has an important function as a repair enzyme for proteins that have been inactivated by oxidation. Catalyzes the reversible oxidation-reduction of methionine sulfoxide in proteins to methionine.</text>
</comment>
<comment type="catalytic activity">
    <reaction evidence="1">
        <text>L-methionyl-[protein] + [thioredoxin]-disulfide + H2O = L-methionyl-(S)-S-oxide-[protein] + [thioredoxin]-dithiol</text>
        <dbReference type="Rhea" id="RHEA:14217"/>
        <dbReference type="Rhea" id="RHEA-COMP:10698"/>
        <dbReference type="Rhea" id="RHEA-COMP:10700"/>
        <dbReference type="Rhea" id="RHEA-COMP:12313"/>
        <dbReference type="Rhea" id="RHEA-COMP:12315"/>
        <dbReference type="ChEBI" id="CHEBI:15377"/>
        <dbReference type="ChEBI" id="CHEBI:16044"/>
        <dbReference type="ChEBI" id="CHEBI:29950"/>
        <dbReference type="ChEBI" id="CHEBI:44120"/>
        <dbReference type="ChEBI" id="CHEBI:50058"/>
        <dbReference type="EC" id="1.8.4.11"/>
    </reaction>
</comment>
<comment type="catalytic activity">
    <reaction evidence="1">
        <text>[thioredoxin]-disulfide + L-methionine + H2O = L-methionine (S)-S-oxide + [thioredoxin]-dithiol</text>
        <dbReference type="Rhea" id="RHEA:19993"/>
        <dbReference type="Rhea" id="RHEA-COMP:10698"/>
        <dbReference type="Rhea" id="RHEA-COMP:10700"/>
        <dbReference type="ChEBI" id="CHEBI:15377"/>
        <dbReference type="ChEBI" id="CHEBI:29950"/>
        <dbReference type="ChEBI" id="CHEBI:50058"/>
        <dbReference type="ChEBI" id="CHEBI:57844"/>
        <dbReference type="ChEBI" id="CHEBI:58772"/>
        <dbReference type="EC" id="1.8.4.11"/>
    </reaction>
</comment>
<comment type="similarity">
    <text evidence="1">Belongs to the MsrA Met sulfoxide reductase family.</text>
</comment>
<organism>
    <name type="scientific">Salmonella gallinarum (strain 287/91 / NCTC 13346)</name>
    <dbReference type="NCBI Taxonomy" id="550538"/>
    <lineage>
        <taxon>Bacteria</taxon>
        <taxon>Pseudomonadati</taxon>
        <taxon>Pseudomonadota</taxon>
        <taxon>Gammaproteobacteria</taxon>
        <taxon>Enterobacterales</taxon>
        <taxon>Enterobacteriaceae</taxon>
        <taxon>Salmonella</taxon>
    </lineage>
</organism>
<sequence>MSLFDKKHLVTQADALPGRNTPMPIATLHAVNEHSMTNVPAGMEIAYFAMGCFWGVERLFWQLPGVYSTAAGYAGGYTPNPTYREVCSGQTGHAEAVRIVYDPAVIRYEQLLQTFWENHDPTQGMQQGNDHGTQYRSAIYPLTPEQNAAAHASRERFQSAMAAAGDHRPITTEIAHATPFYYAEDEHQQYLHKNPYGYCGIGGIGVCLPPDA</sequence>
<evidence type="ECO:0000255" key="1">
    <source>
        <dbReference type="HAMAP-Rule" id="MF_01401"/>
    </source>
</evidence>
<accession>B5R9G7</accession>
<feature type="chain" id="PRO_1000145432" description="Peptide methionine sulfoxide reductase MsrA">
    <location>
        <begin position="1"/>
        <end position="212"/>
    </location>
</feature>
<feature type="active site" evidence="1">
    <location>
        <position position="52"/>
    </location>
</feature>